<accession>Q31NV9</accession>
<feature type="chain" id="PRO_1000053518" description="Phosphatidylglycerol--prolipoprotein diacylglyceryl transferase">
    <location>
        <begin position="1"/>
        <end position="289"/>
    </location>
</feature>
<feature type="transmembrane region" description="Helical" evidence="1">
    <location>
        <begin position="21"/>
        <end position="41"/>
    </location>
</feature>
<feature type="transmembrane region" description="Helical" evidence="1">
    <location>
        <begin position="53"/>
        <end position="73"/>
    </location>
</feature>
<feature type="transmembrane region" description="Helical" evidence="1">
    <location>
        <begin position="95"/>
        <end position="115"/>
    </location>
</feature>
<feature type="transmembrane region" description="Helical" evidence="1">
    <location>
        <begin position="122"/>
        <end position="142"/>
    </location>
</feature>
<feature type="transmembrane region" description="Helical" evidence="1">
    <location>
        <begin position="182"/>
        <end position="202"/>
    </location>
</feature>
<feature type="transmembrane region" description="Helical" evidence="1">
    <location>
        <begin position="215"/>
        <end position="235"/>
    </location>
</feature>
<feature type="transmembrane region" description="Helical" evidence="1">
    <location>
        <begin position="247"/>
        <end position="267"/>
    </location>
</feature>
<feature type="binding site" evidence="1">
    <location>
        <position position="143"/>
    </location>
    <ligand>
        <name>a 1,2-diacyl-sn-glycero-3-phospho-(1'-sn-glycerol)</name>
        <dbReference type="ChEBI" id="CHEBI:64716"/>
    </ligand>
</feature>
<gene>
    <name evidence="1" type="primary">lgt</name>
    <name type="ordered locus">Synpcc7942_1230</name>
</gene>
<dbReference type="EC" id="2.5.1.145" evidence="1"/>
<dbReference type="EMBL" id="CP000100">
    <property type="protein sequence ID" value="ABB57260.1"/>
    <property type="molecule type" value="Genomic_DNA"/>
</dbReference>
<dbReference type="RefSeq" id="WP_011377929.1">
    <property type="nucleotide sequence ID" value="NZ_JACJTX010000003.1"/>
</dbReference>
<dbReference type="SMR" id="Q31NV9"/>
<dbReference type="STRING" id="1140.Synpcc7942_1230"/>
<dbReference type="PaxDb" id="1140-Synpcc7942_1230"/>
<dbReference type="GeneID" id="72430090"/>
<dbReference type="KEGG" id="syf:Synpcc7942_1230"/>
<dbReference type="eggNOG" id="COG0682">
    <property type="taxonomic scope" value="Bacteria"/>
</dbReference>
<dbReference type="HOGENOM" id="CLU_013386_1_2_3"/>
<dbReference type="OrthoDB" id="871140at2"/>
<dbReference type="BioCyc" id="SYNEL:SYNPCC7942_1230-MONOMER"/>
<dbReference type="UniPathway" id="UPA00664"/>
<dbReference type="Proteomes" id="UP000889800">
    <property type="component" value="Chromosome"/>
</dbReference>
<dbReference type="GO" id="GO:0005886">
    <property type="term" value="C:plasma membrane"/>
    <property type="evidence" value="ECO:0007669"/>
    <property type="project" value="UniProtKB-SubCell"/>
</dbReference>
<dbReference type="GO" id="GO:0008961">
    <property type="term" value="F:phosphatidylglycerol-prolipoprotein diacylglyceryl transferase activity"/>
    <property type="evidence" value="ECO:0007669"/>
    <property type="project" value="UniProtKB-UniRule"/>
</dbReference>
<dbReference type="GO" id="GO:0042158">
    <property type="term" value="P:lipoprotein biosynthetic process"/>
    <property type="evidence" value="ECO:0007669"/>
    <property type="project" value="UniProtKB-UniRule"/>
</dbReference>
<dbReference type="HAMAP" id="MF_01147">
    <property type="entry name" value="Lgt"/>
    <property type="match status" value="1"/>
</dbReference>
<dbReference type="InterPro" id="IPR001640">
    <property type="entry name" value="Lgt"/>
</dbReference>
<dbReference type="NCBIfam" id="TIGR00544">
    <property type="entry name" value="lgt"/>
    <property type="match status" value="1"/>
</dbReference>
<dbReference type="PANTHER" id="PTHR30589:SF0">
    <property type="entry name" value="PHOSPHATIDYLGLYCEROL--PROLIPOPROTEIN DIACYLGLYCERYL TRANSFERASE"/>
    <property type="match status" value="1"/>
</dbReference>
<dbReference type="PANTHER" id="PTHR30589">
    <property type="entry name" value="PROLIPOPROTEIN DIACYLGLYCERYL TRANSFERASE"/>
    <property type="match status" value="1"/>
</dbReference>
<dbReference type="Pfam" id="PF01790">
    <property type="entry name" value="LGT"/>
    <property type="match status" value="1"/>
</dbReference>
<dbReference type="PROSITE" id="PS01311">
    <property type="entry name" value="LGT"/>
    <property type="match status" value="1"/>
</dbReference>
<proteinExistence type="inferred from homology"/>
<comment type="function">
    <text evidence="1">Catalyzes the transfer of the diacylglyceryl group from phosphatidylglycerol to the sulfhydryl group of the N-terminal cysteine of a prolipoprotein, the first step in the formation of mature lipoproteins.</text>
</comment>
<comment type="catalytic activity">
    <reaction evidence="1">
        <text>L-cysteinyl-[prolipoprotein] + a 1,2-diacyl-sn-glycero-3-phospho-(1'-sn-glycerol) = an S-1,2-diacyl-sn-glyceryl-L-cysteinyl-[prolipoprotein] + sn-glycerol 1-phosphate + H(+)</text>
        <dbReference type="Rhea" id="RHEA:56712"/>
        <dbReference type="Rhea" id="RHEA-COMP:14679"/>
        <dbReference type="Rhea" id="RHEA-COMP:14680"/>
        <dbReference type="ChEBI" id="CHEBI:15378"/>
        <dbReference type="ChEBI" id="CHEBI:29950"/>
        <dbReference type="ChEBI" id="CHEBI:57685"/>
        <dbReference type="ChEBI" id="CHEBI:64716"/>
        <dbReference type="ChEBI" id="CHEBI:140658"/>
        <dbReference type="EC" id="2.5.1.145"/>
    </reaction>
</comment>
<comment type="pathway">
    <text evidence="1">Protein modification; lipoprotein biosynthesis (diacylglyceryl transfer).</text>
</comment>
<comment type="subcellular location">
    <subcellularLocation>
        <location evidence="1">Cell inner membrane</location>
        <topology evidence="1">Multi-pass membrane protein</topology>
    </subcellularLocation>
</comment>
<comment type="similarity">
    <text evidence="1">Belongs to the Lgt family.</text>
</comment>
<evidence type="ECO:0000255" key="1">
    <source>
        <dbReference type="HAMAP-Rule" id="MF_01147"/>
    </source>
</evidence>
<keyword id="KW-0997">Cell inner membrane</keyword>
<keyword id="KW-1003">Cell membrane</keyword>
<keyword id="KW-0472">Membrane</keyword>
<keyword id="KW-1185">Reference proteome</keyword>
<keyword id="KW-0808">Transferase</keyword>
<keyword id="KW-0812">Transmembrane</keyword>
<keyword id="KW-1133">Transmembrane helix</keyword>
<name>LGT_SYNE7</name>
<reference key="1">
    <citation type="submission" date="2005-08" db="EMBL/GenBank/DDBJ databases">
        <title>Complete sequence of chromosome 1 of Synechococcus elongatus PCC 7942.</title>
        <authorList>
            <consortium name="US DOE Joint Genome Institute"/>
            <person name="Copeland A."/>
            <person name="Lucas S."/>
            <person name="Lapidus A."/>
            <person name="Barry K."/>
            <person name="Detter J.C."/>
            <person name="Glavina T."/>
            <person name="Hammon N."/>
            <person name="Israni S."/>
            <person name="Pitluck S."/>
            <person name="Schmutz J."/>
            <person name="Larimer F."/>
            <person name="Land M."/>
            <person name="Kyrpides N."/>
            <person name="Lykidis A."/>
            <person name="Golden S."/>
            <person name="Richardson P."/>
        </authorList>
    </citation>
    <scope>NUCLEOTIDE SEQUENCE [LARGE SCALE GENOMIC DNA]</scope>
    <source>
        <strain>ATCC 33912 / PCC 7942 / FACHB-805</strain>
    </source>
</reference>
<organism>
    <name type="scientific">Synechococcus elongatus (strain ATCC 33912 / PCC 7942 / FACHB-805)</name>
    <name type="common">Anacystis nidulans R2</name>
    <dbReference type="NCBI Taxonomy" id="1140"/>
    <lineage>
        <taxon>Bacteria</taxon>
        <taxon>Bacillati</taxon>
        <taxon>Cyanobacteriota</taxon>
        <taxon>Cyanophyceae</taxon>
        <taxon>Synechococcales</taxon>
        <taxon>Synechococcaceae</taxon>
        <taxon>Synechococcus</taxon>
    </lineage>
</organism>
<sequence length="289" mass="32163">MAIVTLLALQFTSPGPTLVEIGPLSIRWYGLLIASAVLLGISLSSRLARRRDIDPNAIADLAVWLVIGAIPAARLYYVAFEWQQYASRPAEILAIWHGGIAIHGAILGGTAALILFARRRQIPIWQLTDVVVPSLALGQAIGRWGNFFNSEAFGTPTDLPWKLFIPIDRRPLAYIQSEYFHPTFLYESLWNLLLCLLLIWLFRQGLRQRLPLKAGVMTCIYLIGYSLGRIWIEGLRTDSLMLGSLRIAQMVSIVAIAFGVLGLVWIYGLKRSLPDVVRPAISGESRSEL</sequence>
<protein>
    <recommendedName>
        <fullName evidence="1">Phosphatidylglycerol--prolipoprotein diacylglyceryl transferase</fullName>
        <ecNumber evidence="1">2.5.1.145</ecNumber>
    </recommendedName>
</protein>